<proteinExistence type="inferred from homology"/>
<organism>
    <name type="scientific">Yersinia pseudotuberculosis serotype O:1b (strain IP 31758)</name>
    <dbReference type="NCBI Taxonomy" id="349747"/>
    <lineage>
        <taxon>Bacteria</taxon>
        <taxon>Pseudomonadati</taxon>
        <taxon>Pseudomonadota</taxon>
        <taxon>Gammaproteobacteria</taxon>
        <taxon>Enterobacterales</taxon>
        <taxon>Yersiniaceae</taxon>
        <taxon>Yersinia</taxon>
    </lineage>
</organism>
<protein>
    <recommendedName>
        <fullName evidence="2">Pimeloyl-[acyl-carrier protein] methyl ester esterase</fullName>
        <ecNumber evidence="2">3.1.1.85</ecNumber>
    </recommendedName>
    <alternativeName>
        <fullName evidence="2">Biotin synthesis protein BioH</fullName>
    </alternativeName>
    <alternativeName>
        <fullName evidence="2">Carboxylesterase BioH</fullName>
    </alternativeName>
</protein>
<sequence>MKQLYWYTCGEGDCDLVLLHGWGLNSGVWHCIIDRLAPHFRLHLVDLPGYGRSQDYGAMSLADMAERVAQQAPKQALWLGWSMGGLVASQIALSQPECVRGLITVSSSPCFTARDEWPGIKPEVLAGFQHQLSDDFHRTVERFLALQTLGTESSRQDARLLKSVVLQHQMPDVEVLTGGLAILRTADLRTALAGFTLPFMRVYGHLDSLVPRKVASLLDSAWPQTQSVVMQGAAHAPFISHPNDFAKLILNFAEENKK</sequence>
<evidence type="ECO:0000255" key="1"/>
<evidence type="ECO:0000255" key="2">
    <source>
        <dbReference type="HAMAP-Rule" id="MF_01260"/>
    </source>
</evidence>
<reference key="1">
    <citation type="journal article" date="2007" name="PLoS Genet.">
        <title>The complete genome sequence of Yersinia pseudotuberculosis IP31758, the causative agent of Far East scarlet-like fever.</title>
        <authorList>
            <person name="Eppinger M."/>
            <person name="Rosovitz M.J."/>
            <person name="Fricke W.F."/>
            <person name="Rasko D.A."/>
            <person name="Kokorina G."/>
            <person name="Fayolle C."/>
            <person name="Lindler L.E."/>
            <person name="Carniel E."/>
            <person name="Ravel J."/>
        </authorList>
    </citation>
    <scope>NUCLEOTIDE SEQUENCE [LARGE SCALE GENOMIC DNA]</scope>
    <source>
        <strain>IP 31758</strain>
    </source>
</reference>
<accession>A7FNV8</accession>
<comment type="function">
    <text evidence="2">The physiological role of BioH is to remove the methyl group introduced by BioC when the pimeloyl moiety is complete. It allows to synthesize pimeloyl-ACP via the fatty acid synthetic pathway through the hydrolysis of the ester bonds of pimeloyl-ACP esters.</text>
</comment>
<comment type="catalytic activity">
    <reaction evidence="2">
        <text>6-carboxyhexanoyl-[ACP] methyl ester + H2O = 6-carboxyhexanoyl-[ACP] + methanol + H(+)</text>
        <dbReference type="Rhea" id="RHEA:42700"/>
        <dbReference type="Rhea" id="RHEA-COMP:9955"/>
        <dbReference type="Rhea" id="RHEA-COMP:10186"/>
        <dbReference type="ChEBI" id="CHEBI:15377"/>
        <dbReference type="ChEBI" id="CHEBI:15378"/>
        <dbReference type="ChEBI" id="CHEBI:17790"/>
        <dbReference type="ChEBI" id="CHEBI:78846"/>
        <dbReference type="ChEBI" id="CHEBI:82735"/>
        <dbReference type="EC" id="3.1.1.85"/>
    </reaction>
</comment>
<comment type="pathway">
    <text evidence="2">Cofactor biosynthesis; biotin biosynthesis.</text>
</comment>
<comment type="subunit">
    <text evidence="2">Monomer.</text>
</comment>
<comment type="subcellular location">
    <subcellularLocation>
        <location evidence="2">Cytoplasm</location>
    </subcellularLocation>
</comment>
<comment type="similarity">
    <text evidence="2">Belongs to the AB hydrolase superfamily. Carboxylesterase BioH family.</text>
</comment>
<name>BIOH_YERP3</name>
<feature type="chain" id="PRO_1000067284" description="Pimeloyl-[acyl-carrier protein] methyl ester esterase">
    <location>
        <begin position="1"/>
        <end position="258"/>
    </location>
</feature>
<feature type="domain" description="AB hydrolase-1" evidence="1">
    <location>
        <begin position="16"/>
        <end position="242"/>
    </location>
</feature>
<feature type="active site" description="Nucleophile" evidence="2">
    <location>
        <position position="82"/>
    </location>
</feature>
<feature type="active site" evidence="2">
    <location>
        <position position="207"/>
    </location>
</feature>
<feature type="active site" evidence="2">
    <location>
        <position position="235"/>
    </location>
</feature>
<feature type="binding site" evidence="2">
    <location>
        <position position="22"/>
    </location>
    <ligand>
        <name>substrate</name>
    </ligand>
</feature>
<feature type="binding site" evidence="2">
    <location>
        <begin position="82"/>
        <end position="83"/>
    </location>
    <ligand>
        <name>substrate</name>
    </ligand>
</feature>
<feature type="binding site" evidence="2">
    <location>
        <begin position="143"/>
        <end position="147"/>
    </location>
    <ligand>
        <name>substrate</name>
    </ligand>
</feature>
<feature type="binding site" evidence="2">
    <location>
        <position position="235"/>
    </location>
    <ligand>
        <name>substrate</name>
    </ligand>
</feature>
<keyword id="KW-0093">Biotin biosynthesis</keyword>
<keyword id="KW-0963">Cytoplasm</keyword>
<keyword id="KW-0378">Hydrolase</keyword>
<keyword id="KW-0719">Serine esterase</keyword>
<dbReference type="EC" id="3.1.1.85" evidence="2"/>
<dbReference type="EMBL" id="CP000720">
    <property type="protein sequence ID" value="ABS49141.1"/>
    <property type="molecule type" value="Genomic_DNA"/>
</dbReference>
<dbReference type="RefSeq" id="WP_002208922.1">
    <property type="nucleotide sequence ID" value="NC_009708.1"/>
</dbReference>
<dbReference type="SMR" id="A7FNV8"/>
<dbReference type="ESTHER" id="yerpe-BIOH">
    <property type="family name" value="BioH"/>
</dbReference>
<dbReference type="GeneID" id="57974471"/>
<dbReference type="KEGG" id="ypi:YpsIP31758_3988"/>
<dbReference type="HOGENOM" id="CLU_020336_12_2_6"/>
<dbReference type="UniPathway" id="UPA00078"/>
<dbReference type="Proteomes" id="UP000002412">
    <property type="component" value="Chromosome"/>
</dbReference>
<dbReference type="GO" id="GO:0005737">
    <property type="term" value="C:cytoplasm"/>
    <property type="evidence" value="ECO:0007669"/>
    <property type="project" value="UniProtKB-SubCell"/>
</dbReference>
<dbReference type="GO" id="GO:0090499">
    <property type="term" value="F:pimelyl-[acyl-carrier protein] methyl ester esterase activity"/>
    <property type="evidence" value="ECO:0007669"/>
    <property type="project" value="UniProtKB-EC"/>
</dbReference>
<dbReference type="GO" id="GO:0009102">
    <property type="term" value="P:biotin biosynthetic process"/>
    <property type="evidence" value="ECO:0007669"/>
    <property type="project" value="UniProtKB-UniRule"/>
</dbReference>
<dbReference type="Gene3D" id="3.40.50.1820">
    <property type="entry name" value="alpha/beta hydrolase"/>
    <property type="match status" value="1"/>
</dbReference>
<dbReference type="HAMAP" id="MF_01260">
    <property type="entry name" value="Carboxylester"/>
    <property type="match status" value="1"/>
</dbReference>
<dbReference type="InterPro" id="IPR000073">
    <property type="entry name" value="AB_hydrolase_1"/>
</dbReference>
<dbReference type="InterPro" id="IPR029058">
    <property type="entry name" value="AB_hydrolase_fold"/>
</dbReference>
<dbReference type="InterPro" id="IPR010076">
    <property type="entry name" value="BioH"/>
</dbReference>
<dbReference type="InterPro" id="IPR050228">
    <property type="entry name" value="Carboxylesterase_BioH"/>
</dbReference>
<dbReference type="NCBIfam" id="TIGR01738">
    <property type="entry name" value="bioH"/>
    <property type="match status" value="1"/>
</dbReference>
<dbReference type="PANTHER" id="PTHR43194">
    <property type="entry name" value="HYDROLASE ALPHA/BETA FOLD FAMILY"/>
    <property type="match status" value="1"/>
</dbReference>
<dbReference type="PANTHER" id="PTHR43194:SF5">
    <property type="entry name" value="PIMELOYL-[ACYL-CARRIER PROTEIN] METHYL ESTER ESTERASE"/>
    <property type="match status" value="1"/>
</dbReference>
<dbReference type="Pfam" id="PF00561">
    <property type="entry name" value="Abhydrolase_1"/>
    <property type="match status" value="1"/>
</dbReference>
<dbReference type="SUPFAM" id="SSF53474">
    <property type="entry name" value="alpha/beta-Hydrolases"/>
    <property type="match status" value="1"/>
</dbReference>
<gene>
    <name evidence="2" type="primary">bioH</name>
    <name type="ordered locus">YpsIP31758_3988</name>
</gene>